<keyword id="KW-0131">Cell cycle</keyword>
<keyword id="KW-0132">Cell division</keyword>
<keyword id="KW-0963">Cytoplasm</keyword>
<keyword id="KW-0206">Cytoskeleton</keyword>
<keyword id="KW-0479">Metal-binding</keyword>
<keyword id="KW-0498">Mitosis</keyword>
<keyword id="KW-0539">Nucleus</keyword>
<keyword id="KW-1185">Reference proteome</keyword>
<keyword id="KW-0833">Ubl conjugation pathway</keyword>
<keyword id="KW-0862">Zinc</keyword>
<keyword id="KW-0863">Zinc-finger</keyword>
<proteinExistence type="evidence at transcript level"/>
<comment type="function">
    <text evidence="1">Regulates progression through early mitosis by inhibiting the anaphase promoting complex/cyclosome (APC). Binds to the APC activators cdc20 to prevent APC activation. Can also bind directly to the APC to inhibit substrate-binding. Required to arrest unfertilized eggs at metaphase of meiosis II, by preventing their release from metaphase of meiosis II, through inhibition of APC-dependent cyclin B destruction leading to stabilization of cyclin B-cdk1 complex activity.</text>
</comment>
<comment type="pathway">
    <text>Protein modification; protein ubiquitination.</text>
</comment>
<comment type="subunit">
    <text evidence="1 2">Part of a SCF (SKP1-cullin-F-box) protein ligase complex (By similarity). Interacts with btrc. Interacts with skp1. Interacts with cdc20. Interacts with pin1; stabilizes fbxo5 by preventing its association with btrc in an isomerization-dependent pathway; this interaction is present during G2 phase and prevents fbxo5 degradation. Interacts with plk1 (By similarity).</text>
</comment>
<comment type="subcellular location">
    <subcellularLocation>
        <location evidence="1">Nucleus</location>
    </subcellularLocation>
    <subcellularLocation>
        <location evidence="1">Cytoplasm</location>
    </subcellularLocation>
    <subcellularLocation>
        <location evidence="1">Cytoplasm</location>
        <location evidence="1">Cytoskeleton</location>
        <location evidence="1">Spindle</location>
    </subcellularLocation>
    <subcellularLocation>
        <location evidence="1">Cytoplasm</location>
        <location evidence="1">Cytoskeleton</location>
        <location evidence="1">Microtubule organizing center</location>
        <location evidence="1">Centrosome</location>
    </subcellularLocation>
    <text evidence="1">In interphase, localizes in a punctate manner in the nucleus and cytoplasm with some perinuclear concentration. In mitotic cells, localizes throughout the cell, particularly at the spindle. At metaphase, localized at mitotic centrosomes. Decreases centrosome localization as cells progressed through telophase.</text>
</comment>
<comment type="domain">
    <text evidence="1">The C-terminal region is required for APC inhibition.</text>
</comment>
<comment type="PTM">
    <text evidence="1">Proteolysed; proteolysis is induced by both cyclin B-cdk1 and cyclin A-cdk1/2 complex through probable phosphorylation. Proteolysis is inhibited by pin1 during G2.</text>
</comment>
<sequence>MMCGFTSNPSPKKLLSKSSATNVHLEISPVKPDRPCKGYENVLGSCTTVAKCADLTDDLPVHNKENLLHGFNDLERHHDEENSSLQDSGYSSILQNDSPCQDETDSNVSDIQVRDTPKNLMQYQKPFHTLSTRCLPILRFEAAMCSTLKKMRKTSKKIDWNAVDDVVCGGNYGLEHLIGKSMGLERVDILAELFHRDFKHLLTKILRHLNAMDLINVIGVSTTWRKILQKDNWAYNTYKLGCKELCEKRAKVSTHTATRDESLCRVPLASVQKVAASSLCTSKKQNKNGGLSNNRHAEFIEVAQTLKNDQSLKACVDCGSPAKYDSYLHRAICTRESCKLDFCTLCSCKYHSSKSCLISKPRSYRIPIEPLPGSKKSKQNLRRL</sequence>
<gene>
    <name type="primary">fbxo5-b</name>
    <name type="synonym">emi1-b</name>
</gene>
<organism>
    <name type="scientific">Xenopus laevis</name>
    <name type="common">African clawed frog</name>
    <dbReference type="NCBI Taxonomy" id="8355"/>
    <lineage>
        <taxon>Eukaryota</taxon>
        <taxon>Metazoa</taxon>
        <taxon>Chordata</taxon>
        <taxon>Craniata</taxon>
        <taxon>Vertebrata</taxon>
        <taxon>Euteleostomi</taxon>
        <taxon>Amphibia</taxon>
        <taxon>Batrachia</taxon>
        <taxon>Anura</taxon>
        <taxon>Pipoidea</taxon>
        <taxon>Pipidae</taxon>
        <taxon>Xenopodinae</taxon>
        <taxon>Xenopus</taxon>
        <taxon>Xenopus</taxon>
    </lineage>
</organism>
<reference evidence="7" key="1">
    <citation type="submission" date="2005-06" db="EMBL/GenBank/DDBJ databases">
        <authorList>
            <consortium name="NIH - Xenopus Gene Collection (XGC) project"/>
        </authorList>
    </citation>
    <scope>NUCLEOTIDE SEQUENCE [LARGE SCALE MRNA]</scope>
    <source>
        <tissue evidence="7">Oocyte</tissue>
    </source>
</reference>
<accession>Q4V7W2</accession>
<feature type="chain" id="PRO_0000258011" description="F-box only protein 5-B">
    <location>
        <begin position="1"/>
        <end position="384"/>
    </location>
</feature>
<feature type="domain" description="F-box" evidence="3">
    <location>
        <begin position="191"/>
        <end position="238"/>
    </location>
</feature>
<feature type="zinc finger region" description="ZBR-type" evidence="4">
    <location>
        <begin position="311"/>
        <end position="359"/>
    </location>
</feature>
<feature type="region of interest" description="Disordered" evidence="5">
    <location>
        <begin position="1"/>
        <end position="20"/>
    </location>
</feature>
<feature type="region of interest" description="Disordered" evidence="5">
    <location>
        <begin position="79"/>
        <end position="106"/>
    </location>
</feature>
<feature type="compositionally biased region" description="Low complexity" evidence="5">
    <location>
        <begin position="9"/>
        <end position="19"/>
    </location>
</feature>
<feature type="compositionally biased region" description="Polar residues" evidence="5">
    <location>
        <begin position="83"/>
        <end position="99"/>
    </location>
</feature>
<feature type="binding site" evidence="4">
    <location>
        <position position="315"/>
    </location>
    <ligand>
        <name>Zn(2+)</name>
        <dbReference type="ChEBI" id="CHEBI:29105"/>
        <label>1</label>
    </ligand>
</feature>
<feature type="binding site" evidence="4">
    <location>
        <position position="318"/>
    </location>
    <ligand>
        <name>Zn(2+)</name>
        <dbReference type="ChEBI" id="CHEBI:29105"/>
        <label>1</label>
    </ligand>
</feature>
<feature type="binding site" evidence="4">
    <location>
        <position position="333"/>
    </location>
    <ligand>
        <name>Zn(2+)</name>
        <dbReference type="ChEBI" id="CHEBI:29105"/>
        <label>1</label>
    </ligand>
</feature>
<feature type="binding site" evidence="4">
    <location>
        <position position="338"/>
    </location>
    <ligand>
        <name>Zn(2+)</name>
        <dbReference type="ChEBI" id="CHEBI:29105"/>
        <label>1</label>
    </ligand>
</feature>
<feature type="binding site" evidence="4">
    <location>
        <position position="343"/>
    </location>
    <ligand>
        <name>Zn(2+)</name>
        <dbReference type="ChEBI" id="CHEBI:29105"/>
        <label>2</label>
    </ligand>
</feature>
<feature type="binding site" evidence="4">
    <location>
        <position position="346"/>
    </location>
    <ligand>
        <name>Zn(2+)</name>
        <dbReference type="ChEBI" id="CHEBI:29105"/>
        <label>2</label>
    </ligand>
</feature>
<feature type="binding site" evidence="4">
    <location>
        <position position="351"/>
    </location>
    <ligand>
        <name>Zn(2+)</name>
        <dbReference type="ChEBI" id="CHEBI:29105"/>
        <label>2</label>
    </ligand>
</feature>
<feature type="binding site" evidence="4">
    <location>
        <position position="356"/>
    </location>
    <ligand>
        <name>Zn(2+)</name>
        <dbReference type="ChEBI" id="CHEBI:29105"/>
        <label>2</label>
    </ligand>
</feature>
<name>FBX5B_XENLA</name>
<evidence type="ECO:0000250" key="1">
    <source>
        <dbReference type="UniProtKB" id="Q90Z80"/>
    </source>
</evidence>
<evidence type="ECO:0000250" key="2">
    <source>
        <dbReference type="UniProtKB" id="Q9UKT4"/>
    </source>
</evidence>
<evidence type="ECO:0000255" key="3"/>
<evidence type="ECO:0000255" key="4">
    <source>
        <dbReference type="PROSITE-ProRule" id="PRU01220"/>
    </source>
</evidence>
<evidence type="ECO:0000256" key="5">
    <source>
        <dbReference type="SAM" id="MobiDB-lite"/>
    </source>
</evidence>
<evidence type="ECO:0000305" key="6"/>
<evidence type="ECO:0000312" key="7">
    <source>
        <dbReference type="EMBL" id="AAH97694.1"/>
    </source>
</evidence>
<dbReference type="EMBL" id="BC097694">
    <property type="protein sequence ID" value="AAH97694.1"/>
    <property type="molecule type" value="mRNA"/>
</dbReference>
<dbReference type="RefSeq" id="NP_001089481.1">
    <property type="nucleotide sequence ID" value="NM_001096012.1"/>
</dbReference>
<dbReference type="DNASU" id="734532"/>
<dbReference type="GeneID" id="734532"/>
<dbReference type="KEGG" id="xla:734532"/>
<dbReference type="AGR" id="Xenbase:XB-GENE-6255898"/>
<dbReference type="CTD" id="734532"/>
<dbReference type="Xenbase" id="XB-GENE-6255898">
    <property type="gene designation" value="fbxo5.L"/>
</dbReference>
<dbReference type="OMA" id="QHAICQE"/>
<dbReference type="OrthoDB" id="9984940at2759"/>
<dbReference type="UniPathway" id="UPA00143"/>
<dbReference type="Proteomes" id="UP000186698">
    <property type="component" value="Chromosome 5L"/>
</dbReference>
<dbReference type="Bgee" id="734532">
    <property type="expression patterns" value="Expressed in gastrula and 15 other cell types or tissues"/>
</dbReference>
<dbReference type="GO" id="GO:0005813">
    <property type="term" value="C:centrosome"/>
    <property type="evidence" value="ECO:0007669"/>
    <property type="project" value="UniProtKB-SubCell"/>
</dbReference>
<dbReference type="GO" id="GO:0005737">
    <property type="term" value="C:cytoplasm"/>
    <property type="evidence" value="ECO:0000250"/>
    <property type="project" value="UniProtKB"/>
</dbReference>
<dbReference type="GO" id="GO:0005634">
    <property type="term" value="C:nucleus"/>
    <property type="evidence" value="ECO:0000250"/>
    <property type="project" value="UniProtKB"/>
</dbReference>
<dbReference type="GO" id="GO:0005819">
    <property type="term" value="C:spindle"/>
    <property type="evidence" value="ECO:0000250"/>
    <property type="project" value="UniProtKB"/>
</dbReference>
<dbReference type="GO" id="GO:1990948">
    <property type="term" value="F:ubiquitin ligase inhibitor activity"/>
    <property type="evidence" value="ECO:0000250"/>
    <property type="project" value="UniProtKB"/>
</dbReference>
<dbReference type="GO" id="GO:0008270">
    <property type="term" value="F:zinc ion binding"/>
    <property type="evidence" value="ECO:0007669"/>
    <property type="project" value="UniProtKB-KW"/>
</dbReference>
<dbReference type="GO" id="GO:0051301">
    <property type="term" value="P:cell division"/>
    <property type="evidence" value="ECO:0007669"/>
    <property type="project" value="UniProtKB-KW"/>
</dbReference>
<dbReference type="GO" id="GO:0106061">
    <property type="term" value="P:negative regulation of exit from meiosis"/>
    <property type="evidence" value="ECO:0000250"/>
    <property type="project" value="UniProtKB"/>
</dbReference>
<dbReference type="GO" id="GO:0045835">
    <property type="term" value="P:negative regulation of meiotic nuclear division"/>
    <property type="evidence" value="ECO:0000318"/>
    <property type="project" value="GO_Central"/>
</dbReference>
<dbReference type="GO" id="GO:0045841">
    <property type="term" value="P:negative regulation of mitotic metaphase/anaphase transition"/>
    <property type="evidence" value="ECO:0000250"/>
    <property type="project" value="UniProtKB"/>
</dbReference>
<dbReference type="GO" id="GO:1904667">
    <property type="term" value="P:negative regulation of ubiquitin protein ligase activity"/>
    <property type="evidence" value="ECO:0000250"/>
    <property type="project" value="UniProtKB"/>
</dbReference>
<dbReference type="GO" id="GO:0016567">
    <property type="term" value="P:protein ubiquitination"/>
    <property type="evidence" value="ECO:0007669"/>
    <property type="project" value="UniProtKB-UniPathway"/>
</dbReference>
<dbReference type="GO" id="GO:0051726">
    <property type="term" value="P:regulation of cell cycle"/>
    <property type="evidence" value="ECO:0000250"/>
    <property type="project" value="UniProtKB"/>
</dbReference>
<dbReference type="GO" id="GO:0007088">
    <property type="term" value="P:regulation of mitotic nuclear division"/>
    <property type="evidence" value="ECO:0000318"/>
    <property type="project" value="GO_Central"/>
</dbReference>
<dbReference type="CDD" id="cd20364">
    <property type="entry name" value="BRcat_RBR_FBXO5"/>
    <property type="match status" value="1"/>
</dbReference>
<dbReference type="CDD" id="cd22170">
    <property type="entry name" value="F-box_FBXO5"/>
    <property type="match status" value="1"/>
</dbReference>
<dbReference type="FunFam" id="2.20.25.20:FF:000006">
    <property type="entry name" value="F-box only protein 5"/>
    <property type="match status" value="1"/>
</dbReference>
<dbReference type="Gene3D" id="2.20.25.20">
    <property type="match status" value="1"/>
</dbReference>
<dbReference type="InterPro" id="IPR036047">
    <property type="entry name" value="F-box-like_dom_sf"/>
</dbReference>
<dbReference type="InterPro" id="IPR001810">
    <property type="entry name" value="F-box_dom"/>
</dbReference>
<dbReference type="InterPro" id="IPR047147">
    <property type="entry name" value="FBX5_43"/>
</dbReference>
<dbReference type="InterPro" id="IPR044064">
    <property type="entry name" value="ZF_ZBR"/>
</dbReference>
<dbReference type="PANTHER" id="PTHR15493:SF8">
    <property type="entry name" value="F-BOX ONLY PROTEIN 5"/>
    <property type="match status" value="1"/>
</dbReference>
<dbReference type="PANTHER" id="PTHR15493">
    <property type="entry name" value="F-BOX ONLY PROTEIN 5 AND 43"/>
    <property type="match status" value="1"/>
</dbReference>
<dbReference type="Pfam" id="PF00646">
    <property type="entry name" value="F-box"/>
    <property type="match status" value="1"/>
</dbReference>
<dbReference type="SUPFAM" id="SSF81383">
    <property type="entry name" value="F-box domain"/>
    <property type="match status" value="1"/>
</dbReference>
<dbReference type="SUPFAM" id="SSF57850">
    <property type="entry name" value="RING/U-box"/>
    <property type="match status" value="1"/>
</dbReference>
<dbReference type="PROSITE" id="PS51872">
    <property type="entry name" value="ZF_ZBR"/>
    <property type="match status" value="1"/>
</dbReference>
<protein>
    <recommendedName>
        <fullName evidence="6">F-box only protein 5-B</fullName>
    </recommendedName>
    <alternativeName>
        <fullName>Early mitotic inhibitor 1-B</fullName>
    </alternativeName>
</protein>